<organism>
    <name type="scientific">Herminiimonas arsenicoxydans</name>
    <dbReference type="NCBI Taxonomy" id="204773"/>
    <lineage>
        <taxon>Bacteria</taxon>
        <taxon>Pseudomonadati</taxon>
        <taxon>Pseudomonadota</taxon>
        <taxon>Betaproteobacteria</taxon>
        <taxon>Burkholderiales</taxon>
        <taxon>Oxalobacteraceae</taxon>
        <taxon>Herminiimonas</taxon>
    </lineage>
</organism>
<accession>A4G2T6</accession>
<evidence type="ECO:0000255" key="1">
    <source>
        <dbReference type="HAMAP-Rule" id="MF_00014"/>
    </source>
</evidence>
<proteinExistence type="inferred from homology"/>
<dbReference type="EMBL" id="CU207211">
    <property type="protein sequence ID" value="CAL60823.1"/>
    <property type="molecule type" value="Genomic_DNA"/>
</dbReference>
<dbReference type="SMR" id="A4G2T6"/>
<dbReference type="STRING" id="204773.HEAR0624"/>
<dbReference type="KEGG" id="har:HEAR0624"/>
<dbReference type="eggNOG" id="COG0806">
    <property type="taxonomic scope" value="Bacteria"/>
</dbReference>
<dbReference type="HOGENOM" id="CLU_077636_1_0_4"/>
<dbReference type="Proteomes" id="UP000006697">
    <property type="component" value="Chromosome"/>
</dbReference>
<dbReference type="GO" id="GO:0005737">
    <property type="term" value="C:cytoplasm"/>
    <property type="evidence" value="ECO:0007669"/>
    <property type="project" value="UniProtKB-SubCell"/>
</dbReference>
<dbReference type="GO" id="GO:0005840">
    <property type="term" value="C:ribosome"/>
    <property type="evidence" value="ECO:0007669"/>
    <property type="project" value="InterPro"/>
</dbReference>
<dbReference type="GO" id="GO:0043022">
    <property type="term" value="F:ribosome binding"/>
    <property type="evidence" value="ECO:0007669"/>
    <property type="project" value="InterPro"/>
</dbReference>
<dbReference type="GO" id="GO:0042274">
    <property type="term" value="P:ribosomal small subunit biogenesis"/>
    <property type="evidence" value="ECO:0007669"/>
    <property type="project" value="UniProtKB-UniRule"/>
</dbReference>
<dbReference type="GO" id="GO:0006364">
    <property type="term" value="P:rRNA processing"/>
    <property type="evidence" value="ECO:0007669"/>
    <property type="project" value="UniProtKB-UniRule"/>
</dbReference>
<dbReference type="Gene3D" id="2.30.30.240">
    <property type="entry name" value="PRC-barrel domain"/>
    <property type="match status" value="1"/>
</dbReference>
<dbReference type="Gene3D" id="2.40.30.60">
    <property type="entry name" value="RimM"/>
    <property type="match status" value="1"/>
</dbReference>
<dbReference type="HAMAP" id="MF_00014">
    <property type="entry name" value="Ribosome_mat_RimM"/>
    <property type="match status" value="1"/>
</dbReference>
<dbReference type="InterPro" id="IPR011033">
    <property type="entry name" value="PRC_barrel-like_sf"/>
</dbReference>
<dbReference type="InterPro" id="IPR056792">
    <property type="entry name" value="PRC_RimM"/>
</dbReference>
<dbReference type="InterPro" id="IPR011961">
    <property type="entry name" value="RimM"/>
</dbReference>
<dbReference type="InterPro" id="IPR002676">
    <property type="entry name" value="RimM_N"/>
</dbReference>
<dbReference type="InterPro" id="IPR036976">
    <property type="entry name" value="RimM_N_sf"/>
</dbReference>
<dbReference type="InterPro" id="IPR009000">
    <property type="entry name" value="Transl_B-barrel_sf"/>
</dbReference>
<dbReference type="NCBIfam" id="TIGR02273">
    <property type="entry name" value="16S_RimM"/>
    <property type="match status" value="1"/>
</dbReference>
<dbReference type="PANTHER" id="PTHR33692">
    <property type="entry name" value="RIBOSOME MATURATION FACTOR RIMM"/>
    <property type="match status" value="1"/>
</dbReference>
<dbReference type="PANTHER" id="PTHR33692:SF1">
    <property type="entry name" value="RIBOSOME MATURATION FACTOR RIMM"/>
    <property type="match status" value="1"/>
</dbReference>
<dbReference type="Pfam" id="PF24986">
    <property type="entry name" value="PRC_RimM"/>
    <property type="match status" value="1"/>
</dbReference>
<dbReference type="Pfam" id="PF01782">
    <property type="entry name" value="RimM"/>
    <property type="match status" value="1"/>
</dbReference>
<dbReference type="SUPFAM" id="SSF50346">
    <property type="entry name" value="PRC-barrel domain"/>
    <property type="match status" value="1"/>
</dbReference>
<dbReference type="SUPFAM" id="SSF50447">
    <property type="entry name" value="Translation proteins"/>
    <property type="match status" value="1"/>
</dbReference>
<comment type="function">
    <text evidence="1">An accessory protein needed during the final step in the assembly of 30S ribosomal subunit, possibly for assembly of the head region. Essential for efficient processing of 16S rRNA. May be needed both before and after RbfA during the maturation of 16S rRNA. It has affinity for free ribosomal 30S subunits but not for 70S ribosomes.</text>
</comment>
<comment type="subunit">
    <text evidence="1">Binds ribosomal protein uS19.</text>
</comment>
<comment type="subcellular location">
    <subcellularLocation>
        <location evidence="1">Cytoplasm</location>
    </subcellularLocation>
</comment>
<comment type="domain">
    <text evidence="1">The PRC barrel domain binds ribosomal protein uS19.</text>
</comment>
<comment type="similarity">
    <text evidence="1">Belongs to the RimM family.</text>
</comment>
<gene>
    <name evidence="1" type="primary">rimM</name>
    <name type="ordered locus">HEAR0624</name>
</gene>
<feature type="chain" id="PRO_0000351764" description="Ribosome maturation factor RimM">
    <location>
        <begin position="1"/>
        <end position="177"/>
    </location>
</feature>
<feature type="domain" description="PRC barrel" evidence="1">
    <location>
        <begin position="96"/>
        <end position="177"/>
    </location>
</feature>
<sequence length="177" mass="19525">MKVPEDLVLVGYISGAYGLNGWVRVRPYSADADALLNAKTWWLDKPEFRDVAMMQSKIHSGDVVAQLMGVAGRDAAEALKGATVQIPRSHFPALSDNEFYWVDLIGLEVENLQGVRLGQVSDMMDNGAHPILRVAVPQTSEADPKAAQELLIPFVEQFVITIDQTAKKITVDWGLDY</sequence>
<reference key="1">
    <citation type="journal article" date="2007" name="PLoS Genet.">
        <title>A tale of two oxidation states: bacterial colonization of arsenic-rich environments.</title>
        <authorList>
            <person name="Muller D."/>
            <person name="Medigue C."/>
            <person name="Koechler S."/>
            <person name="Barbe V."/>
            <person name="Barakat M."/>
            <person name="Talla E."/>
            <person name="Bonnefoy V."/>
            <person name="Krin E."/>
            <person name="Arsene-Ploetze F."/>
            <person name="Carapito C."/>
            <person name="Chandler M."/>
            <person name="Cournoyer B."/>
            <person name="Cruveiller S."/>
            <person name="Dossat C."/>
            <person name="Duval S."/>
            <person name="Heymann M."/>
            <person name="Leize E."/>
            <person name="Lieutaud A."/>
            <person name="Lievremont D."/>
            <person name="Makita Y."/>
            <person name="Mangenot S."/>
            <person name="Nitschke W."/>
            <person name="Ortet P."/>
            <person name="Perdrial N."/>
            <person name="Schoepp B."/>
            <person name="Siguier P."/>
            <person name="Simeonova D.D."/>
            <person name="Rouy Z."/>
            <person name="Segurens B."/>
            <person name="Turlin E."/>
            <person name="Vallenet D."/>
            <person name="van Dorsselaer A."/>
            <person name="Weiss S."/>
            <person name="Weissenbach J."/>
            <person name="Lett M.-C."/>
            <person name="Danchin A."/>
            <person name="Bertin P.N."/>
        </authorList>
    </citation>
    <scope>NUCLEOTIDE SEQUENCE [LARGE SCALE GENOMIC DNA]</scope>
    <source>
        <strain>ULPAs1</strain>
    </source>
</reference>
<keyword id="KW-0143">Chaperone</keyword>
<keyword id="KW-0963">Cytoplasm</keyword>
<keyword id="KW-1185">Reference proteome</keyword>
<keyword id="KW-0690">Ribosome biogenesis</keyword>
<keyword id="KW-0698">rRNA processing</keyword>
<name>RIMM_HERAR</name>
<protein>
    <recommendedName>
        <fullName evidence="1">Ribosome maturation factor RimM</fullName>
    </recommendedName>
</protein>